<evidence type="ECO:0000255" key="1">
    <source>
        <dbReference type="HAMAP-Rule" id="MF_00194"/>
    </source>
</evidence>
<feature type="chain" id="PRO_1000021246" description="Recombination-associated protein RdgC">
    <location>
        <begin position="1"/>
        <end position="301"/>
    </location>
</feature>
<accession>Q5GUF4</accession>
<proteinExistence type="inferred from homology"/>
<reference key="1">
    <citation type="journal article" date="2005" name="Nucleic Acids Res.">
        <title>The genome sequence of Xanthomonas oryzae pathovar oryzae KACC10331, the bacterial blight pathogen of rice.</title>
        <authorList>
            <person name="Lee B.-M."/>
            <person name="Park Y.-J."/>
            <person name="Park D.-S."/>
            <person name="Kang H.-W."/>
            <person name="Kim J.-G."/>
            <person name="Song E.-S."/>
            <person name="Park I.-C."/>
            <person name="Yoon U.-H."/>
            <person name="Hahn J.-H."/>
            <person name="Koo B.-S."/>
            <person name="Lee G.-B."/>
            <person name="Kim H."/>
            <person name="Park H.-S."/>
            <person name="Yoon K.-O."/>
            <person name="Kim J.-H."/>
            <person name="Jung C.-H."/>
            <person name="Koh N.-H."/>
            <person name="Seo J.-S."/>
            <person name="Go S.-J."/>
        </authorList>
    </citation>
    <scope>NUCLEOTIDE SEQUENCE [LARGE SCALE GENOMIC DNA]</scope>
    <source>
        <strain>KACC10331 / KXO85</strain>
    </source>
</reference>
<name>RDGC_XANOR</name>
<comment type="function">
    <text evidence="1">May be involved in recombination.</text>
</comment>
<comment type="subcellular location">
    <subcellularLocation>
        <location evidence="1">Cytoplasm</location>
        <location evidence="1">Nucleoid</location>
    </subcellularLocation>
</comment>
<comment type="similarity">
    <text evidence="1">Belongs to the RdgC family.</text>
</comment>
<gene>
    <name evidence="1" type="primary">rdgC</name>
    <name type="ordered locus">XOO4415</name>
</gene>
<sequence>MFFRNLTLFRFPTTLDFSQIDTLLPPVQLKPVGPLEMSSRGFISPFGRDEQGVLSHRLEDFLWLTVGGEDKILPGAVVNDLLERKVAEIEEKEGRRPSGKARKRLKDDLIHELLPRAFVKSSRTDAILDLQHGYIAVNSSSRKSGENVMSEIRGALGSFPALPLNAEVAPRAILTGWIAGEPLPEGLSLGEECEMKDPIEGGAVVKCQHQELRGDEIDKHLEAGKQVTKLALVLDDNLSFVLGDDLVIRKLKFLDGALDQLEHSEDDGARAELDARFTLMSAEIRRLFLLLETALKLSKAE</sequence>
<protein>
    <recommendedName>
        <fullName evidence="1">Recombination-associated protein RdgC</fullName>
    </recommendedName>
</protein>
<organism>
    <name type="scientific">Xanthomonas oryzae pv. oryzae (strain KACC10331 / KXO85)</name>
    <dbReference type="NCBI Taxonomy" id="291331"/>
    <lineage>
        <taxon>Bacteria</taxon>
        <taxon>Pseudomonadati</taxon>
        <taxon>Pseudomonadota</taxon>
        <taxon>Gammaproteobacteria</taxon>
        <taxon>Lysobacterales</taxon>
        <taxon>Lysobacteraceae</taxon>
        <taxon>Xanthomonas</taxon>
    </lineage>
</organism>
<dbReference type="EMBL" id="AE013598">
    <property type="protein sequence ID" value="AAW77669.1"/>
    <property type="molecule type" value="Genomic_DNA"/>
</dbReference>
<dbReference type="SMR" id="Q5GUF4"/>
<dbReference type="STRING" id="291331.XOO4415"/>
<dbReference type="KEGG" id="xoo:XOO4415"/>
<dbReference type="HOGENOM" id="CLU_052038_1_1_6"/>
<dbReference type="Proteomes" id="UP000006735">
    <property type="component" value="Chromosome"/>
</dbReference>
<dbReference type="GO" id="GO:0043590">
    <property type="term" value="C:bacterial nucleoid"/>
    <property type="evidence" value="ECO:0007669"/>
    <property type="project" value="TreeGrafter"/>
</dbReference>
<dbReference type="GO" id="GO:0005737">
    <property type="term" value="C:cytoplasm"/>
    <property type="evidence" value="ECO:0007669"/>
    <property type="project" value="UniProtKB-UniRule"/>
</dbReference>
<dbReference type="GO" id="GO:0003690">
    <property type="term" value="F:double-stranded DNA binding"/>
    <property type="evidence" value="ECO:0007669"/>
    <property type="project" value="TreeGrafter"/>
</dbReference>
<dbReference type="GO" id="GO:0006310">
    <property type="term" value="P:DNA recombination"/>
    <property type="evidence" value="ECO:0007669"/>
    <property type="project" value="UniProtKB-UniRule"/>
</dbReference>
<dbReference type="GO" id="GO:0000018">
    <property type="term" value="P:regulation of DNA recombination"/>
    <property type="evidence" value="ECO:0007669"/>
    <property type="project" value="TreeGrafter"/>
</dbReference>
<dbReference type="HAMAP" id="MF_00194">
    <property type="entry name" value="RdgC"/>
    <property type="match status" value="1"/>
</dbReference>
<dbReference type="InterPro" id="IPR007476">
    <property type="entry name" value="RdgC"/>
</dbReference>
<dbReference type="NCBIfam" id="NF001464">
    <property type="entry name" value="PRK00321.1-5"/>
    <property type="match status" value="1"/>
</dbReference>
<dbReference type="NCBIfam" id="NF001465">
    <property type="entry name" value="PRK00321.1-6"/>
    <property type="match status" value="1"/>
</dbReference>
<dbReference type="PANTHER" id="PTHR38103">
    <property type="entry name" value="RECOMBINATION-ASSOCIATED PROTEIN RDGC"/>
    <property type="match status" value="1"/>
</dbReference>
<dbReference type="PANTHER" id="PTHR38103:SF1">
    <property type="entry name" value="RECOMBINATION-ASSOCIATED PROTEIN RDGC"/>
    <property type="match status" value="1"/>
</dbReference>
<dbReference type="Pfam" id="PF04381">
    <property type="entry name" value="RdgC"/>
    <property type="match status" value="1"/>
</dbReference>
<keyword id="KW-0963">Cytoplasm</keyword>
<keyword id="KW-0233">DNA recombination</keyword>
<keyword id="KW-1185">Reference proteome</keyword>